<comment type="function">
    <text evidence="1">Involved in allosteric regulation of aspartate carbamoyltransferase.</text>
</comment>
<comment type="cofactor">
    <cofactor evidence="1">
        <name>Zn(2+)</name>
        <dbReference type="ChEBI" id="CHEBI:29105"/>
    </cofactor>
    <text evidence="1">Binds 1 zinc ion per subunit.</text>
</comment>
<comment type="subunit">
    <text evidence="1">Contains catalytic and regulatory chains.</text>
</comment>
<comment type="similarity">
    <text evidence="1">Belongs to the PyrI family.</text>
</comment>
<accession>B7M9K4</accession>
<sequence length="153" mass="17121">MTHDNKLQVEAIKRGTVIDHIPAQIGFKLLSLFKLTETDQRITIGLNLPSGEMGRKDLIKIENTFLSEDQVDQLALYAPQATVNRIDNYEVVGKSRPSLPERIDNVLVCPNSNCISHAEPVSSSFAVRKRANDIALKCKYCEKEFSHNVVLAN</sequence>
<gene>
    <name evidence="1" type="primary">pyrI</name>
    <name type="ordered locus">ECIAI1_4476</name>
</gene>
<name>PYRI_ECO8A</name>
<organism>
    <name type="scientific">Escherichia coli O8 (strain IAI1)</name>
    <dbReference type="NCBI Taxonomy" id="585034"/>
    <lineage>
        <taxon>Bacteria</taxon>
        <taxon>Pseudomonadati</taxon>
        <taxon>Pseudomonadota</taxon>
        <taxon>Gammaproteobacteria</taxon>
        <taxon>Enterobacterales</taxon>
        <taxon>Enterobacteriaceae</taxon>
        <taxon>Escherichia</taxon>
    </lineage>
</organism>
<keyword id="KW-0479">Metal-binding</keyword>
<keyword id="KW-0665">Pyrimidine biosynthesis</keyword>
<keyword id="KW-0862">Zinc</keyword>
<protein>
    <recommendedName>
        <fullName evidence="1">Aspartate carbamoyltransferase regulatory chain</fullName>
    </recommendedName>
</protein>
<dbReference type="EMBL" id="CU928160">
    <property type="protein sequence ID" value="CAR01218.1"/>
    <property type="molecule type" value="Genomic_DNA"/>
</dbReference>
<dbReference type="RefSeq" id="WP_000148581.1">
    <property type="nucleotide sequence ID" value="NC_011741.1"/>
</dbReference>
<dbReference type="SMR" id="B7M9K4"/>
<dbReference type="GeneID" id="93777580"/>
<dbReference type="KEGG" id="ecr:ECIAI1_4476"/>
<dbReference type="HOGENOM" id="CLU_128576_0_0_6"/>
<dbReference type="GO" id="GO:0009347">
    <property type="term" value="C:aspartate carbamoyltransferase complex"/>
    <property type="evidence" value="ECO:0007669"/>
    <property type="project" value="InterPro"/>
</dbReference>
<dbReference type="GO" id="GO:0046872">
    <property type="term" value="F:metal ion binding"/>
    <property type="evidence" value="ECO:0007669"/>
    <property type="project" value="UniProtKB-KW"/>
</dbReference>
<dbReference type="GO" id="GO:0006207">
    <property type="term" value="P:'de novo' pyrimidine nucleobase biosynthetic process"/>
    <property type="evidence" value="ECO:0007669"/>
    <property type="project" value="InterPro"/>
</dbReference>
<dbReference type="GO" id="GO:0006221">
    <property type="term" value="P:pyrimidine nucleotide biosynthetic process"/>
    <property type="evidence" value="ECO:0007669"/>
    <property type="project" value="UniProtKB-UniRule"/>
</dbReference>
<dbReference type="FunFam" id="2.30.30.20:FF:000001">
    <property type="entry name" value="Aspartate carbamoyltransferase regulatory chain"/>
    <property type="match status" value="1"/>
</dbReference>
<dbReference type="FunFam" id="3.30.70.140:FF:000001">
    <property type="entry name" value="Aspartate carbamoyltransferase regulatory chain"/>
    <property type="match status" value="1"/>
</dbReference>
<dbReference type="Gene3D" id="2.30.30.20">
    <property type="entry name" value="Aspartate carbamoyltransferase regulatory subunit, C-terminal domain"/>
    <property type="match status" value="1"/>
</dbReference>
<dbReference type="Gene3D" id="3.30.70.140">
    <property type="entry name" value="Aspartate carbamoyltransferase regulatory subunit, N-terminal domain"/>
    <property type="match status" value="1"/>
</dbReference>
<dbReference type="HAMAP" id="MF_00002">
    <property type="entry name" value="Asp_carb_tr_reg"/>
    <property type="match status" value="1"/>
</dbReference>
<dbReference type="InterPro" id="IPR020545">
    <property type="entry name" value="Asp_carbamoyltransf_reg_N"/>
</dbReference>
<dbReference type="InterPro" id="IPR002801">
    <property type="entry name" value="Asp_carbamoylTrfase_reg"/>
</dbReference>
<dbReference type="InterPro" id="IPR020542">
    <property type="entry name" value="Asp_carbamoyltrfase_reg_C"/>
</dbReference>
<dbReference type="InterPro" id="IPR036792">
    <property type="entry name" value="Asp_carbatrfase_reg_C_sf"/>
</dbReference>
<dbReference type="InterPro" id="IPR036793">
    <property type="entry name" value="Asp_carbatrfase_reg_N_sf"/>
</dbReference>
<dbReference type="NCBIfam" id="TIGR00240">
    <property type="entry name" value="ATCase_reg"/>
    <property type="match status" value="1"/>
</dbReference>
<dbReference type="PANTHER" id="PTHR35805">
    <property type="entry name" value="ASPARTATE CARBAMOYLTRANSFERASE REGULATORY CHAIN"/>
    <property type="match status" value="1"/>
</dbReference>
<dbReference type="PANTHER" id="PTHR35805:SF1">
    <property type="entry name" value="ASPARTATE CARBAMOYLTRANSFERASE REGULATORY CHAIN"/>
    <property type="match status" value="1"/>
</dbReference>
<dbReference type="Pfam" id="PF01948">
    <property type="entry name" value="PyrI"/>
    <property type="match status" value="1"/>
</dbReference>
<dbReference type="Pfam" id="PF02748">
    <property type="entry name" value="PyrI_C"/>
    <property type="match status" value="1"/>
</dbReference>
<dbReference type="SUPFAM" id="SSF57825">
    <property type="entry name" value="Aspartate carbamoyltransferase, Regulatory-chain, C-terminal domain"/>
    <property type="match status" value="1"/>
</dbReference>
<dbReference type="SUPFAM" id="SSF54893">
    <property type="entry name" value="Aspartate carbamoyltransferase, Regulatory-chain, N-terminal domain"/>
    <property type="match status" value="1"/>
</dbReference>
<feature type="chain" id="PRO_1000193112" description="Aspartate carbamoyltransferase regulatory chain">
    <location>
        <begin position="1"/>
        <end position="153"/>
    </location>
</feature>
<feature type="binding site" evidence="1">
    <location>
        <position position="109"/>
    </location>
    <ligand>
        <name>Zn(2+)</name>
        <dbReference type="ChEBI" id="CHEBI:29105"/>
    </ligand>
</feature>
<feature type="binding site" evidence="1">
    <location>
        <position position="114"/>
    </location>
    <ligand>
        <name>Zn(2+)</name>
        <dbReference type="ChEBI" id="CHEBI:29105"/>
    </ligand>
</feature>
<feature type="binding site" evidence="1">
    <location>
        <position position="138"/>
    </location>
    <ligand>
        <name>Zn(2+)</name>
        <dbReference type="ChEBI" id="CHEBI:29105"/>
    </ligand>
</feature>
<feature type="binding site" evidence="1">
    <location>
        <position position="141"/>
    </location>
    <ligand>
        <name>Zn(2+)</name>
        <dbReference type="ChEBI" id="CHEBI:29105"/>
    </ligand>
</feature>
<reference key="1">
    <citation type="journal article" date="2009" name="PLoS Genet.">
        <title>Organised genome dynamics in the Escherichia coli species results in highly diverse adaptive paths.</title>
        <authorList>
            <person name="Touchon M."/>
            <person name="Hoede C."/>
            <person name="Tenaillon O."/>
            <person name="Barbe V."/>
            <person name="Baeriswyl S."/>
            <person name="Bidet P."/>
            <person name="Bingen E."/>
            <person name="Bonacorsi S."/>
            <person name="Bouchier C."/>
            <person name="Bouvet O."/>
            <person name="Calteau A."/>
            <person name="Chiapello H."/>
            <person name="Clermont O."/>
            <person name="Cruveiller S."/>
            <person name="Danchin A."/>
            <person name="Diard M."/>
            <person name="Dossat C."/>
            <person name="Karoui M.E."/>
            <person name="Frapy E."/>
            <person name="Garry L."/>
            <person name="Ghigo J.M."/>
            <person name="Gilles A.M."/>
            <person name="Johnson J."/>
            <person name="Le Bouguenec C."/>
            <person name="Lescat M."/>
            <person name="Mangenot S."/>
            <person name="Martinez-Jehanne V."/>
            <person name="Matic I."/>
            <person name="Nassif X."/>
            <person name="Oztas S."/>
            <person name="Petit M.A."/>
            <person name="Pichon C."/>
            <person name="Rouy Z."/>
            <person name="Ruf C.S."/>
            <person name="Schneider D."/>
            <person name="Tourret J."/>
            <person name="Vacherie B."/>
            <person name="Vallenet D."/>
            <person name="Medigue C."/>
            <person name="Rocha E.P.C."/>
            <person name="Denamur E."/>
        </authorList>
    </citation>
    <scope>NUCLEOTIDE SEQUENCE [LARGE SCALE GENOMIC DNA]</scope>
    <source>
        <strain>IAI1</strain>
    </source>
</reference>
<evidence type="ECO:0000255" key="1">
    <source>
        <dbReference type="HAMAP-Rule" id="MF_00002"/>
    </source>
</evidence>
<proteinExistence type="inferred from homology"/>